<name>DAPB_NITSB</name>
<evidence type="ECO:0000255" key="1">
    <source>
        <dbReference type="HAMAP-Rule" id="MF_00102"/>
    </source>
</evidence>
<evidence type="ECO:0000305" key="2"/>
<dbReference type="EC" id="1.17.1.8" evidence="1"/>
<dbReference type="EMBL" id="AP009178">
    <property type="protein sequence ID" value="BAF70655.1"/>
    <property type="molecule type" value="Genomic_DNA"/>
</dbReference>
<dbReference type="RefSeq" id="WP_012082918.1">
    <property type="nucleotide sequence ID" value="NC_009662.1"/>
</dbReference>
<dbReference type="SMR" id="A6Q596"/>
<dbReference type="FunCoup" id="A6Q596">
    <property type="interactions" value="452"/>
</dbReference>
<dbReference type="STRING" id="387092.NIS_1548"/>
<dbReference type="KEGG" id="nis:NIS_1548"/>
<dbReference type="eggNOG" id="COG0289">
    <property type="taxonomic scope" value="Bacteria"/>
</dbReference>
<dbReference type="HOGENOM" id="CLU_047479_2_2_7"/>
<dbReference type="InParanoid" id="A6Q596"/>
<dbReference type="OrthoDB" id="9790352at2"/>
<dbReference type="UniPathway" id="UPA00034">
    <property type="reaction ID" value="UER00018"/>
</dbReference>
<dbReference type="Proteomes" id="UP000001118">
    <property type="component" value="Chromosome"/>
</dbReference>
<dbReference type="GO" id="GO:0005829">
    <property type="term" value="C:cytosol"/>
    <property type="evidence" value="ECO:0007669"/>
    <property type="project" value="TreeGrafter"/>
</dbReference>
<dbReference type="GO" id="GO:0008839">
    <property type="term" value="F:4-hydroxy-tetrahydrodipicolinate reductase"/>
    <property type="evidence" value="ECO:0007669"/>
    <property type="project" value="UniProtKB-EC"/>
</dbReference>
<dbReference type="GO" id="GO:0051287">
    <property type="term" value="F:NAD binding"/>
    <property type="evidence" value="ECO:0007669"/>
    <property type="project" value="UniProtKB-UniRule"/>
</dbReference>
<dbReference type="GO" id="GO:0050661">
    <property type="term" value="F:NADP binding"/>
    <property type="evidence" value="ECO:0007669"/>
    <property type="project" value="UniProtKB-UniRule"/>
</dbReference>
<dbReference type="GO" id="GO:0016726">
    <property type="term" value="F:oxidoreductase activity, acting on CH or CH2 groups, NAD or NADP as acceptor"/>
    <property type="evidence" value="ECO:0007669"/>
    <property type="project" value="UniProtKB-UniRule"/>
</dbReference>
<dbReference type="GO" id="GO:0019877">
    <property type="term" value="P:diaminopimelate biosynthetic process"/>
    <property type="evidence" value="ECO:0007669"/>
    <property type="project" value="UniProtKB-UniRule"/>
</dbReference>
<dbReference type="GO" id="GO:0009089">
    <property type="term" value="P:lysine biosynthetic process via diaminopimelate"/>
    <property type="evidence" value="ECO:0007669"/>
    <property type="project" value="UniProtKB-UniRule"/>
</dbReference>
<dbReference type="CDD" id="cd02274">
    <property type="entry name" value="DHDPR_N"/>
    <property type="match status" value="1"/>
</dbReference>
<dbReference type="FunFam" id="3.30.360.10:FF:000004">
    <property type="entry name" value="4-hydroxy-tetrahydrodipicolinate reductase"/>
    <property type="match status" value="1"/>
</dbReference>
<dbReference type="Gene3D" id="3.30.360.10">
    <property type="entry name" value="Dihydrodipicolinate Reductase, domain 2"/>
    <property type="match status" value="1"/>
</dbReference>
<dbReference type="Gene3D" id="3.40.50.720">
    <property type="entry name" value="NAD(P)-binding Rossmann-like Domain"/>
    <property type="match status" value="1"/>
</dbReference>
<dbReference type="HAMAP" id="MF_00102">
    <property type="entry name" value="DapB"/>
    <property type="match status" value="1"/>
</dbReference>
<dbReference type="InterPro" id="IPR022663">
    <property type="entry name" value="DapB_C"/>
</dbReference>
<dbReference type="InterPro" id="IPR000846">
    <property type="entry name" value="DapB_N"/>
</dbReference>
<dbReference type="InterPro" id="IPR022664">
    <property type="entry name" value="DapB_N_CS"/>
</dbReference>
<dbReference type="InterPro" id="IPR023940">
    <property type="entry name" value="DHDPR_bac"/>
</dbReference>
<dbReference type="InterPro" id="IPR036291">
    <property type="entry name" value="NAD(P)-bd_dom_sf"/>
</dbReference>
<dbReference type="NCBIfam" id="TIGR00036">
    <property type="entry name" value="dapB"/>
    <property type="match status" value="1"/>
</dbReference>
<dbReference type="PANTHER" id="PTHR20836:SF0">
    <property type="entry name" value="4-HYDROXY-TETRAHYDRODIPICOLINATE REDUCTASE 1, CHLOROPLASTIC-RELATED"/>
    <property type="match status" value="1"/>
</dbReference>
<dbReference type="PANTHER" id="PTHR20836">
    <property type="entry name" value="DIHYDRODIPICOLINATE REDUCTASE"/>
    <property type="match status" value="1"/>
</dbReference>
<dbReference type="Pfam" id="PF05173">
    <property type="entry name" value="DapB_C"/>
    <property type="match status" value="1"/>
</dbReference>
<dbReference type="Pfam" id="PF01113">
    <property type="entry name" value="DapB_N"/>
    <property type="match status" value="1"/>
</dbReference>
<dbReference type="PIRSF" id="PIRSF000161">
    <property type="entry name" value="DHPR"/>
    <property type="match status" value="1"/>
</dbReference>
<dbReference type="SUPFAM" id="SSF55347">
    <property type="entry name" value="Glyceraldehyde-3-phosphate dehydrogenase-like, C-terminal domain"/>
    <property type="match status" value="1"/>
</dbReference>
<dbReference type="SUPFAM" id="SSF51735">
    <property type="entry name" value="NAD(P)-binding Rossmann-fold domains"/>
    <property type="match status" value="1"/>
</dbReference>
<dbReference type="PROSITE" id="PS01298">
    <property type="entry name" value="DAPB"/>
    <property type="match status" value="1"/>
</dbReference>
<comment type="function">
    <text evidence="1">Catalyzes the conversion of 4-hydroxy-tetrahydrodipicolinate (HTPA) to tetrahydrodipicolinate.</text>
</comment>
<comment type="catalytic activity">
    <reaction evidence="1">
        <text>(S)-2,3,4,5-tetrahydrodipicolinate + NAD(+) + H2O = (2S,4S)-4-hydroxy-2,3,4,5-tetrahydrodipicolinate + NADH + H(+)</text>
        <dbReference type="Rhea" id="RHEA:35323"/>
        <dbReference type="ChEBI" id="CHEBI:15377"/>
        <dbReference type="ChEBI" id="CHEBI:15378"/>
        <dbReference type="ChEBI" id="CHEBI:16845"/>
        <dbReference type="ChEBI" id="CHEBI:57540"/>
        <dbReference type="ChEBI" id="CHEBI:57945"/>
        <dbReference type="ChEBI" id="CHEBI:67139"/>
        <dbReference type="EC" id="1.17.1.8"/>
    </reaction>
</comment>
<comment type="catalytic activity">
    <reaction evidence="1">
        <text>(S)-2,3,4,5-tetrahydrodipicolinate + NADP(+) + H2O = (2S,4S)-4-hydroxy-2,3,4,5-tetrahydrodipicolinate + NADPH + H(+)</text>
        <dbReference type="Rhea" id="RHEA:35331"/>
        <dbReference type="ChEBI" id="CHEBI:15377"/>
        <dbReference type="ChEBI" id="CHEBI:15378"/>
        <dbReference type="ChEBI" id="CHEBI:16845"/>
        <dbReference type="ChEBI" id="CHEBI:57783"/>
        <dbReference type="ChEBI" id="CHEBI:58349"/>
        <dbReference type="ChEBI" id="CHEBI:67139"/>
        <dbReference type="EC" id="1.17.1.8"/>
    </reaction>
</comment>
<comment type="pathway">
    <text evidence="1">Amino-acid biosynthesis; L-lysine biosynthesis via DAP pathway; (S)-tetrahydrodipicolinate from L-aspartate: step 4/4.</text>
</comment>
<comment type="subcellular location">
    <subcellularLocation>
        <location evidence="1">Cytoplasm</location>
    </subcellularLocation>
</comment>
<comment type="similarity">
    <text evidence="1">Belongs to the DapB family.</text>
</comment>
<comment type="caution">
    <text evidence="2">Was originally thought to be a dihydrodipicolinate reductase (DHDPR), catalyzing the conversion of dihydrodipicolinate to tetrahydrodipicolinate. However, it was shown in E.coli that the substrate of the enzymatic reaction is not dihydrodipicolinate (DHDP) but in fact (2S,4S)-4-hydroxy-2,3,4,5-tetrahydrodipicolinic acid (HTPA), the product released by the DapA-catalyzed reaction.</text>
</comment>
<reference key="1">
    <citation type="journal article" date="2007" name="Proc. Natl. Acad. Sci. U.S.A.">
        <title>Deep-sea vent epsilon-proteobacterial genomes provide insights into emergence of pathogens.</title>
        <authorList>
            <person name="Nakagawa S."/>
            <person name="Takaki Y."/>
            <person name="Shimamura S."/>
            <person name="Reysenbach A.-L."/>
            <person name="Takai K."/>
            <person name="Horikoshi K."/>
        </authorList>
    </citation>
    <scope>NUCLEOTIDE SEQUENCE [LARGE SCALE GENOMIC DNA]</scope>
    <source>
        <strain>SB155-2</strain>
    </source>
</reference>
<proteinExistence type="inferred from homology"/>
<feature type="chain" id="PRO_1000008608" description="4-hydroxy-tetrahydrodipicolinate reductase">
    <location>
        <begin position="1"/>
        <end position="254"/>
    </location>
</feature>
<feature type="active site" description="Proton donor/acceptor" evidence="1">
    <location>
        <position position="143"/>
    </location>
</feature>
<feature type="active site" description="Proton donor" evidence="1">
    <location>
        <position position="147"/>
    </location>
</feature>
<feature type="binding site" evidence="1">
    <location>
        <begin position="8"/>
        <end position="13"/>
    </location>
    <ligand>
        <name>NAD(+)</name>
        <dbReference type="ChEBI" id="CHEBI:57540"/>
    </ligand>
</feature>
<feature type="binding site" evidence="1">
    <location>
        <begin position="87"/>
        <end position="89"/>
    </location>
    <ligand>
        <name>NAD(+)</name>
        <dbReference type="ChEBI" id="CHEBI:57540"/>
    </ligand>
</feature>
<feature type="binding site" evidence="1">
    <location>
        <begin position="111"/>
        <end position="114"/>
    </location>
    <ligand>
        <name>NAD(+)</name>
        <dbReference type="ChEBI" id="CHEBI:57540"/>
    </ligand>
</feature>
<feature type="binding site" evidence="1">
    <location>
        <position position="144"/>
    </location>
    <ligand>
        <name>(S)-2,3,4,5-tetrahydrodipicolinate</name>
        <dbReference type="ChEBI" id="CHEBI:16845"/>
    </ligand>
</feature>
<feature type="binding site" evidence="1">
    <location>
        <begin position="153"/>
        <end position="154"/>
    </location>
    <ligand>
        <name>(S)-2,3,4,5-tetrahydrodipicolinate</name>
        <dbReference type="ChEBI" id="CHEBI:16845"/>
    </ligand>
</feature>
<protein>
    <recommendedName>
        <fullName evidence="1">4-hydroxy-tetrahydrodipicolinate reductase</fullName>
        <shortName evidence="1">HTPA reductase</shortName>
        <ecNumber evidence="1">1.17.1.8</ecNumber>
    </recommendedName>
</protein>
<keyword id="KW-0028">Amino-acid biosynthesis</keyword>
<keyword id="KW-0963">Cytoplasm</keyword>
<keyword id="KW-0220">Diaminopimelate biosynthesis</keyword>
<keyword id="KW-0457">Lysine biosynthesis</keyword>
<keyword id="KW-0520">NAD</keyword>
<keyword id="KW-0521">NADP</keyword>
<keyword id="KW-0560">Oxidoreductase</keyword>
<keyword id="KW-1185">Reference proteome</keyword>
<sequence length="254" mass="27674">MLNVGIYGGSGRVGSLLIKNLQHDEVARVSVVHVLKGIELAVPGATVTNDIDTLIQKSDVIIDFTLPEGTESLLERLLEHPKPLVSGTTGLNKHQQNLMQTLAQKTPVLYATNMSLGIALLKRLVAVTSEKLRDFDIEIVEMHHRYKKDAPSGTALTLAEFAAKARGLDLEKVRVSGRDGNIGERSKEEIGVFALRGGDIVGRHTVGFYNDGEYIELNHTATSRDTFAKGAIKAAKWLVSQEPGFYTIDDCLGL</sequence>
<organism>
    <name type="scientific">Nitratiruptor sp. (strain SB155-2)</name>
    <dbReference type="NCBI Taxonomy" id="387092"/>
    <lineage>
        <taxon>Bacteria</taxon>
        <taxon>Pseudomonadati</taxon>
        <taxon>Campylobacterota</taxon>
        <taxon>Epsilonproteobacteria</taxon>
        <taxon>Nautiliales</taxon>
        <taxon>Nitratiruptoraceae</taxon>
        <taxon>Nitratiruptor</taxon>
    </lineage>
</organism>
<accession>A6Q596</accession>
<gene>
    <name evidence="1" type="primary">dapB</name>
    <name type="ordered locus">NIS_1548</name>
</gene>